<proteinExistence type="evidence at protein level"/>
<accession>Q9TT95</accession>
<name>GALP_PIG</name>
<sequence length="120" mass="12681">MALTVPLIVLAVLLSLMESPASAPVHRGRGGWTLNSAGYLLGPVLHPPSRAEGGGKGKTALGILDLWKAIDGLPYPQSQLASKRSLGETFAKPDSGVTFVGVPDVVPWKRIRPGTTRFQI</sequence>
<evidence type="ECO:0000250" key="1"/>
<evidence type="ECO:0000269" key="2">
    <source>
    </source>
</evidence>
<evidence type="ECO:0000305" key="3"/>
<comment type="function">
    <text evidence="1">Hypothalamic neuropeptide which binds to the G-protein-coupled galanin receptors (GALR1, GALR2 and GALR3). Involved in a large number of putative physiological functions in CNS homeostatic processes, including the regulation of gonadotropin-releasing hormone secretion (By similarity).</text>
</comment>
<comment type="subcellular location">
    <subcellularLocation>
        <location>Secreted</location>
    </subcellularLocation>
</comment>
<comment type="similarity">
    <text evidence="3">Belongs to the galanin family.</text>
</comment>
<gene>
    <name type="primary">GALP</name>
</gene>
<dbReference type="EMBL" id="AF188490">
    <property type="protein sequence ID" value="AAF19722.1"/>
    <property type="molecule type" value="mRNA"/>
</dbReference>
<dbReference type="RefSeq" id="NP_998990.1">
    <property type="nucleotide sequence ID" value="NM_213825.3"/>
</dbReference>
<dbReference type="FunCoup" id="Q9TT95">
    <property type="interactions" value="8"/>
</dbReference>
<dbReference type="STRING" id="9823.ENSSSCP00000057469"/>
<dbReference type="PaxDb" id="9823-ENSSSCP00000003598"/>
<dbReference type="Ensembl" id="ENSSSCT00015027343.1">
    <property type="protein sequence ID" value="ENSSSCP00015010709.1"/>
    <property type="gene ID" value="ENSSSCG00015020587.1"/>
</dbReference>
<dbReference type="Ensembl" id="ENSSSCT00110065003">
    <property type="protein sequence ID" value="ENSSSCP00110045645"/>
    <property type="gene ID" value="ENSSSCG00110034143"/>
</dbReference>
<dbReference type="GeneID" id="396772"/>
<dbReference type="KEGG" id="ssc:396772"/>
<dbReference type="CTD" id="85569"/>
<dbReference type="eggNOG" id="ENOG502TI9H">
    <property type="taxonomic scope" value="Eukaryota"/>
</dbReference>
<dbReference type="InParanoid" id="Q9TT95"/>
<dbReference type="OrthoDB" id="8721537at2759"/>
<dbReference type="Proteomes" id="UP000008227">
    <property type="component" value="Unplaced"/>
</dbReference>
<dbReference type="Proteomes" id="UP000314985">
    <property type="component" value="Unplaced"/>
</dbReference>
<dbReference type="Proteomes" id="UP000694570">
    <property type="component" value="Unplaced"/>
</dbReference>
<dbReference type="Proteomes" id="UP000694571">
    <property type="component" value="Unplaced"/>
</dbReference>
<dbReference type="Proteomes" id="UP000694720">
    <property type="component" value="Unplaced"/>
</dbReference>
<dbReference type="Proteomes" id="UP000694722">
    <property type="component" value="Unplaced"/>
</dbReference>
<dbReference type="Proteomes" id="UP000694723">
    <property type="component" value="Unplaced"/>
</dbReference>
<dbReference type="Proteomes" id="UP000694724">
    <property type="component" value="Unplaced"/>
</dbReference>
<dbReference type="Proteomes" id="UP000694725">
    <property type="component" value="Unplaced"/>
</dbReference>
<dbReference type="Proteomes" id="UP000694726">
    <property type="component" value="Unplaced"/>
</dbReference>
<dbReference type="Proteomes" id="UP000694727">
    <property type="component" value="Unplaced"/>
</dbReference>
<dbReference type="Proteomes" id="UP000694728">
    <property type="component" value="Unplaced"/>
</dbReference>
<dbReference type="GO" id="GO:0005576">
    <property type="term" value="C:extracellular region"/>
    <property type="evidence" value="ECO:0007669"/>
    <property type="project" value="UniProtKB-SubCell"/>
</dbReference>
<dbReference type="GO" id="GO:0005179">
    <property type="term" value="F:hormone activity"/>
    <property type="evidence" value="ECO:0007669"/>
    <property type="project" value="UniProtKB-KW"/>
</dbReference>
<dbReference type="GO" id="GO:0042595">
    <property type="term" value="P:behavioral response to starvation"/>
    <property type="evidence" value="ECO:0000318"/>
    <property type="project" value="GO_Central"/>
</dbReference>
<dbReference type="GO" id="GO:0007218">
    <property type="term" value="P:neuropeptide signaling pathway"/>
    <property type="evidence" value="ECO:0007669"/>
    <property type="project" value="UniProtKB-KW"/>
</dbReference>
<dbReference type="InterPro" id="IPR008174">
    <property type="entry name" value="Galanin"/>
</dbReference>
<dbReference type="InterPro" id="IPR039244">
    <property type="entry name" value="GALP"/>
</dbReference>
<dbReference type="PANTHER" id="PTHR20950:SF1">
    <property type="entry name" value="GALANIN-LIKE PEPTIDE"/>
    <property type="match status" value="1"/>
</dbReference>
<dbReference type="PANTHER" id="PTHR20950">
    <property type="entry name" value="GALANIN-RELATED PEPTIDE"/>
    <property type="match status" value="1"/>
</dbReference>
<dbReference type="Pfam" id="PF01296">
    <property type="entry name" value="Galanin"/>
    <property type="match status" value="1"/>
</dbReference>
<dbReference type="PROSITE" id="PS00861">
    <property type="entry name" value="GALANIN"/>
    <property type="match status" value="1"/>
</dbReference>
<reference key="1">
    <citation type="journal article" date="1999" name="J. Biol. Chem.">
        <title>Isolation and cDNA cloning of a novel galanin-like peptide (GALP) from porcine hypothalamus.</title>
        <authorList>
            <person name="Ohtaki T."/>
            <person name="Kumano S."/>
            <person name="Ishibashi Y."/>
            <person name="Ogi K."/>
            <person name="Matsui H."/>
            <person name="Harada M."/>
            <person name="Kitada C."/>
            <person name="Kurokawa T."/>
            <person name="Onda H."/>
            <person name="Fujino M."/>
        </authorList>
    </citation>
    <scope>NUCLEOTIDE SEQUENCE [MRNA]</scope>
    <scope>PROTEIN SEQUENCE OF 23-82</scope>
    <scope>SYNTHESIS OF 23-82</scope>
    <source>
        <tissue>Hypothalamus</tissue>
    </source>
</reference>
<feature type="signal peptide" evidence="2">
    <location>
        <begin position="1"/>
        <end position="22"/>
    </location>
</feature>
<feature type="peptide" id="PRO_0000010465" description="Galanin-like peptide">
    <location>
        <begin position="23"/>
        <end position="82"/>
    </location>
</feature>
<feature type="propeptide" id="PRO_0000010466">
    <location>
        <begin position="85"/>
        <end position="120"/>
    </location>
</feature>
<organism>
    <name type="scientific">Sus scrofa</name>
    <name type="common">Pig</name>
    <dbReference type="NCBI Taxonomy" id="9823"/>
    <lineage>
        <taxon>Eukaryota</taxon>
        <taxon>Metazoa</taxon>
        <taxon>Chordata</taxon>
        <taxon>Craniata</taxon>
        <taxon>Vertebrata</taxon>
        <taxon>Euteleostomi</taxon>
        <taxon>Mammalia</taxon>
        <taxon>Eutheria</taxon>
        <taxon>Laurasiatheria</taxon>
        <taxon>Artiodactyla</taxon>
        <taxon>Suina</taxon>
        <taxon>Suidae</taxon>
        <taxon>Sus</taxon>
    </lineage>
</organism>
<protein>
    <recommendedName>
        <fullName>Galanin-like peptide</fullName>
    </recommendedName>
</protein>
<keyword id="KW-0165">Cleavage on pair of basic residues</keyword>
<keyword id="KW-0903">Direct protein sequencing</keyword>
<keyword id="KW-0372">Hormone</keyword>
<keyword id="KW-0527">Neuropeptide</keyword>
<keyword id="KW-1185">Reference proteome</keyword>
<keyword id="KW-0964">Secreted</keyword>
<keyword id="KW-0732">Signal</keyword>